<name>PLPP3_BOVIN</name>
<feature type="chain" id="PRO_0000286942" description="Phospholipid phosphatase 3">
    <location>
        <begin position="1"/>
        <end position="311"/>
    </location>
</feature>
<feature type="topological domain" description="Cytoplasmic" evidence="6">
    <location>
        <begin position="1"/>
        <end position="33"/>
    </location>
</feature>
<feature type="transmembrane region" description="Helical" evidence="5">
    <location>
        <begin position="34"/>
        <end position="54"/>
    </location>
</feature>
<feature type="topological domain" description="Extracellular" evidence="6">
    <location>
        <begin position="55"/>
        <end position="85"/>
    </location>
</feature>
<feature type="transmembrane region" description="Helical" evidence="5">
    <location>
        <begin position="86"/>
        <end position="106"/>
    </location>
</feature>
<feature type="topological domain" description="Cytoplasmic" evidence="6">
    <location>
        <begin position="107"/>
        <end position="123"/>
    </location>
</feature>
<feature type="transmembrane region" description="Helical" evidence="5">
    <location>
        <begin position="124"/>
        <end position="144"/>
    </location>
</feature>
<feature type="topological domain" description="Extracellular" evidence="6">
    <location>
        <begin position="145"/>
        <end position="194"/>
    </location>
</feature>
<feature type="transmembrane region" description="Helical" evidence="5">
    <location>
        <begin position="195"/>
        <end position="215"/>
    </location>
</feature>
<feature type="topological domain" description="Cytoplasmic" evidence="6">
    <location>
        <begin position="216"/>
        <end position="226"/>
    </location>
</feature>
<feature type="transmembrane region" description="Helical" evidence="5">
    <location>
        <begin position="227"/>
        <end position="244"/>
    </location>
</feature>
<feature type="topological domain" description="Extracellular" evidence="6">
    <location>
        <begin position="245"/>
        <end position="258"/>
    </location>
</feature>
<feature type="transmembrane region" description="Helical" evidence="5">
    <location>
        <begin position="259"/>
        <end position="279"/>
    </location>
</feature>
<feature type="topological domain" description="Cytoplasmic" evidence="6">
    <location>
        <begin position="280"/>
        <end position="311"/>
    </location>
</feature>
<feature type="region of interest" description="Phosphatase sequence motif I" evidence="2">
    <location>
        <begin position="149"/>
        <end position="157"/>
    </location>
</feature>
<feature type="region of interest" description="Phosphatase sequence motif II" evidence="2">
    <location>
        <begin position="197"/>
        <end position="200"/>
    </location>
</feature>
<feature type="region of interest" description="Phosphatase sequence motif III" evidence="2">
    <location>
        <begin position="245"/>
        <end position="256"/>
    </location>
</feature>
<feature type="region of interest" description="Mediates interaction with CTNND1" evidence="1">
    <location>
        <begin position="276"/>
        <end position="311"/>
    </location>
</feature>
<feature type="short sequence motif" description="Dityrosine basolateral targeting motif" evidence="1">
    <location>
        <begin position="109"/>
        <end position="110"/>
    </location>
</feature>
<feature type="short sequence motif" description="Integrin-binding motif" evidence="1">
    <location>
        <begin position="183"/>
        <end position="185"/>
    </location>
</feature>
<feature type="active site" description="Proton donors" evidence="2">
    <location>
        <position position="200"/>
    </location>
</feature>
<feature type="active site" description="Nucleophile" evidence="2">
    <location>
        <position position="252"/>
    </location>
</feature>
<feature type="site" description="Stabilizes the active site histidine for nucleophilic attack" evidence="2">
    <location>
        <position position="256"/>
    </location>
</feature>
<feature type="modified residue" description="Phosphoserine" evidence="1">
    <location>
        <position position="19"/>
    </location>
</feature>
<feature type="glycosylation site" description="N-linked (GlcNAc...) asparagine" evidence="5">
    <location>
        <position position="171"/>
    </location>
</feature>
<evidence type="ECO:0000250" key="1">
    <source>
        <dbReference type="UniProtKB" id="O14495"/>
    </source>
</evidence>
<evidence type="ECO:0000250" key="2">
    <source>
        <dbReference type="UniProtKB" id="O34349"/>
    </source>
</evidence>
<evidence type="ECO:0000250" key="3">
    <source>
        <dbReference type="UniProtKB" id="P97544"/>
    </source>
</evidence>
<evidence type="ECO:0000250" key="4">
    <source>
        <dbReference type="UniProtKB" id="Q99JY8"/>
    </source>
</evidence>
<evidence type="ECO:0000255" key="5"/>
<evidence type="ECO:0000305" key="6"/>
<proteinExistence type="evidence at transcript level"/>
<gene>
    <name evidence="1" type="primary">PLPP3</name>
    <name type="synonym">PPAP2B</name>
</gene>
<comment type="function">
    <text evidence="1 4">Magnesium-independent phospholipid phosphatase of the plasma membrane that catalyzes the dephosphorylation of a variety of glycerolipid and sphingolipid phosphate esters including phosphatidate/PA, lysophosphatidate/LPA, diacylglycerol pyrophosphate/DGPP, sphingosine 1-phosphate/S1P and ceramide 1-phosphate/C1P. Also acts on N-oleoyl ethanolamine phosphate/N-(9Z-octadecenoyl)-ethanolamine phosphate, a potential physiological compound. Has both an extracellular and an intracellular phosphatase activity, allowing the hydrolysis and the cellular uptake of these bioactive lipid mediators from the milieu, regulating signal transduction in different cellular processes. Through the dephosphorylation of extracellular sphingosine-1-phosphate and the regulation of its extra- and intracellular availability, plays a role in vascular homeostasis, regulating endothelial cell migration, adhesion, survival, proliferation and the production of pro-inflammatory cytokines (By similarity). By maintaining the appropriate levels of this lipid in the cerebellum, also ensure its proper development and function (By similarity). Through its intracellular lipid phosphatase activity may act in early compartments of the secretory pathway, regulating the formation of Golgi to endoplasmic reticulum retrograde transport carriers (By similarity).</text>
</comment>
<comment type="function">
    <text evidence="4">Independently of this phosphatase activity may also function in the Wnt signaling pathway and the stabilization of beta-catenin/CTNNB1, thereby regulating cell proliferation, migration and differentiation in angiogenesis or yet in tumor growth. Also plays a role in integrin-mediated cell-cell adhesion in angiogenesis.</text>
</comment>
<comment type="catalytic activity">
    <reaction evidence="1">
        <text>a 1,2-diacyl-sn-glycero-3-phosphate + H2O = a 1,2-diacyl-sn-glycerol + phosphate</text>
        <dbReference type="Rhea" id="RHEA:27429"/>
        <dbReference type="ChEBI" id="CHEBI:15377"/>
        <dbReference type="ChEBI" id="CHEBI:17815"/>
        <dbReference type="ChEBI" id="CHEBI:43474"/>
        <dbReference type="ChEBI" id="CHEBI:58608"/>
        <dbReference type="EC" id="3.1.3.4"/>
    </reaction>
    <physiologicalReaction direction="left-to-right" evidence="1">
        <dbReference type="Rhea" id="RHEA:27430"/>
    </physiologicalReaction>
</comment>
<comment type="catalytic activity">
    <reaction evidence="1">
        <text>1,2-dihexadecanoyl-sn-glycero-3-phosphate + H2O = 1,2-dihexadecanoyl-sn-glycerol + phosphate</text>
        <dbReference type="Rhea" id="RHEA:43236"/>
        <dbReference type="ChEBI" id="CHEBI:15377"/>
        <dbReference type="ChEBI" id="CHEBI:43474"/>
        <dbReference type="ChEBI" id="CHEBI:72859"/>
        <dbReference type="ChEBI" id="CHEBI:82929"/>
    </reaction>
    <physiologicalReaction direction="left-to-right" evidence="1">
        <dbReference type="Rhea" id="RHEA:43237"/>
    </physiologicalReaction>
</comment>
<comment type="catalytic activity">
    <reaction evidence="1">
        <text>1,2-di-(9Z-octadecenoyl)-sn-glycero-3-phosphate + H2O = 1,2-di-(9Z-octadecenoyl)-sn-glycerol + phosphate</text>
        <dbReference type="Rhea" id="RHEA:43244"/>
        <dbReference type="ChEBI" id="CHEBI:15377"/>
        <dbReference type="ChEBI" id="CHEBI:43474"/>
        <dbReference type="ChEBI" id="CHEBI:52333"/>
        <dbReference type="ChEBI" id="CHEBI:74546"/>
    </reaction>
    <physiologicalReaction direction="left-to-right" evidence="1">
        <dbReference type="Rhea" id="RHEA:43245"/>
    </physiologicalReaction>
</comment>
<comment type="catalytic activity">
    <reaction evidence="1">
        <text>a monoacyl-sn-glycero-3-phosphate + H2O = a monoacylglycerol + phosphate</text>
        <dbReference type="Rhea" id="RHEA:46736"/>
        <dbReference type="ChEBI" id="CHEBI:15377"/>
        <dbReference type="ChEBI" id="CHEBI:17408"/>
        <dbReference type="ChEBI" id="CHEBI:43474"/>
        <dbReference type="ChEBI" id="CHEBI:77589"/>
    </reaction>
    <physiologicalReaction direction="left-to-right" evidence="1">
        <dbReference type="Rhea" id="RHEA:46737"/>
    </physiologicalReaction>
</comment>
<comment type="catalytic activity">
    <reaction evidence="1">
        <text>(9Z)-octadecenoyl-sn-glycero-3-phosphate + H2O = (9Z-octadecenoyl)-glycerol + phosphate</text>
        <dbReference type="Rhea" id="RHEA:50884"/>
        <dbReference type="ChEBI" id="CHEBI:15377"/>
        <dbReference type="ChEBI" id="CHEBI:43474"/>
        <dbReference type="ChEBI" id="CHEBI:75937"/>
        <dbReference type="ChEBI" id="CHEBI:84973"/>
    </reaction>
    <physiologicalReaction direction="left-to-right" evidence="1">
        <dbReference type="Rhea" id="RHEA:50885"/>
    </physiologicalReaction>
</comment>
<comment type="catalytic activity">
    <reaction evidence="1">
        <text>sphing-4-enine 1-phosphate + H2O = sphing-4-enine + phosphate</text>
        <dbReference type="Rhea" id="RHEA:27518"/>
        <dbReference type="ChEBI" id="CHEBI:15377"/>
        <dbReference type="ChEBI" id="CHEBI:43474"/>
        <dbReference type="ChEBI" id="CHEBI:57756"/>
        <dbReference type="ChEBI" id="CHEBI:60119"/>
    </reaction>
    <physiologicalReaction direction="left-to-right" evidence="1">
        <dbReference type="Rhea" id="RHEA:27519"/>
    </physiologicalReaction>
</comment>
<comment type="catalytic activity">
    <reaction evidence="1">
        <text>an N-acylsphing-4-enine 1-phosphate + H2O = an N-acylsphing-4-enine + phosphate</text>
        <dbReference type="Rhea" id="RHEA:33743"/>
        <dbReference type="ChEBI" id="CHEBI:15377"/>
        <dbReference type="ChEBI" id="CHEBI:43474"/>
        <dbReference type="ChEBI" id="CHEBI:52639"/>
        <dbReference type="ChEBI" id="CHEBI:57674"/>
    </reaction>
    <physiologicalReaction direction="left-to-right" evidence="1">
        <dbReference type="Rhea" id="RHEA:33744"/>
    </physiologicalReaction>
</comment>
<comment type="catalytic activity">
    <reaction evidence="1">
        <text>N-(octanoyl)-sphing-4-enine-1-phosphate + H2O = N-octanoylsphing-4-enine + phosphate</text>
        <dbReference type="Rhea" id="RHEA:62040"/>
        <dbReference type="ChEBI" id="CHEBI:15377"/>
        <dbReference type="ChEBI" id="CHEBI:43474"/>
        <dbReference type="ChEBI" id="CHEBI:45815"/>
        <dbReference type="ChEBI" id="CHEBI:85376"/>
    </reaction>
    <physiologicalReaction direction="left-to-right" evidence="1">
        <dbReference type="Rhea" id="RHEA:62041"/>
    </physiologicalReaction>
</comment>
<comment type="catalytic activity">
    <reaction evidence="1">
        <text>N-(9Z-octadecenoyl)-ethanolamine phosphate + H2O = N-(9Z-octadecenoyl) ethanolamine + phosphate</text>
        <dbReference type="Rhea" id="RHEA:62160"/>
        <dbReference type="ChEBI" id="CHEBI:15377"/>
        <dbReference type="ChEBI" id="CHEBI:43474"/>
        <dbReference type="ChEBI" id="CHEBI:71466"/>
        <dbReference type="ChEBI" id="CHEBI:145465"/>
    </reaction>
    <physiologicalReaction direction="left-to-right" evidence="1">
        <dbReference type="Rhea" id="RHEA:62161"/>
    </physiologicalReaction>
</comment>
<comment type="activity regulation">
    <text evidence="1">Magnesium-independent phospholipid phosphatase. Insensitive to N-ethylmaleimide. Inhibited by sphingosine, zinc ions and modestly by propanolol.</text>
</comment>
<comment type="pathway">
    <text evidence="1">Lipid metabolism; phospholipid metabolism.</text>
</comment>
<comment type="subunit">
    <text evidence="1">Forms functional homodimers and homooligomers that are not required for substrate recognition and catalytic activity. Can also form heterooligomers with other PLPP2 and PLPP3. Interacts with CTNND1; negatively regulates the PLPP3-mediated stabilization of beta-catenin/CTNNB1.</text>
</comment>
<comment type="subcellular location">
    <subcellularLocation>
        <location evidence="1">Cell membrane</location>
        <topology evidence="3">Multi-pass membrane protein</topology>
    </subcellularLocation>
    <subcellularLocation>
        <location evidence="1">Basolateral cell membrane</location>
        <topology evidence="3">Multi-pass membrane protein</topology>
    </subcellularLocation>
    <subcellularLocation>
        <location evidence="1">Endoplasmic reticulum membrane</location>
        <topology evidence="3">Multi-pass membrane protein</topology>
    </subcellularLocation>
    <subcellularLocation>
        <location evidence="1">Endoplasmic reticulum-Golgi intermediate compartment membrane</location>
        <topology evidence="3">Multi-pass membrane protein</topology>
    </subcellularLocation>
    <subcellularLocation>
        <location evidence="1">Golgi apparatus membrane</location>
        <topology evidence="3">Multi-pass membrane protein</topology>
    </subcellularLocation>
    <subcellularLocation>
        <location evidence="1">Golgi apparatus</location>
        <location evidence="1">trans-Golgi network membrane</location>
        <topology evidence="3">Multi-pass membrane protein</topology>
    </subcellularLocation>
    <subcellularLocation>
        <location evidence="1">Membrane raft</location>
        <topology evidence="3">Multi-pass membrane protein</topology>
    </subcellularLocation>
    <text evidence="1">Cycles between the endoplasmic reticulum and the Golgi.</text>
</comment>
<comment type="domain">
    <text evidence="1">The integrin-binding motif mediates the binding to integrin alpha-5/beta-1 (ITGA5:ITGB1) and integrin alpha-V/beta-3 (ITGAV:ITGB3) and is required for the function in integrin-mediated cell-cell adhesion.</text>
</comment>
<comment type="domain">
    <text evidence="1">The dityrosine basolateral targeting motif mediates localization to the basolateral membrane in polarized cells.</text>
</comment>
<comment type="PTM">
    <text evidence="1">N-glycosylated. Contains high-mannose oligosaccharides.</text>
</comment>
<comment type="similarity">
    <text evidence="6">Belongs to the PA-phosphatase related phosphoesterase family.</text>
</comment>
<protein>
    <recommendedName>
        <fullName evidence="6">Phospholipid phosphatase 3</fullName>
        <ecNumber evidence="1">3.1.3.-</ecNumber>
        <ecNumber evidence="1">3.1.3.4</ecNumber>
    </recommendedName>
    <alternativeName>
        <fullName>Lipid phosphate phosphohydrolase 3</fullName>
    </alternativeName>
    <alternativeName>
        <fullName>PAP2-beta</fullName>
    </alternativeName>
    <alternativeName>
        <fullName>Phosphatidate phosphohydrolase type 2b</fullName>
    </alternativeName>
    <alternativeName>
        <fullName>Phosphatidic acid phosphatase 2b</fullName>
        <shortName>PAP-2b</shortName>
        <shortName>PAP2b</shortName>
    </alternativeName>
</protein>
<reference key="1">
    <citation type="submission" date="2005-08" db="EMBL/GenBank/DDBJ databases">
        <authorList>
            <consortium name="NIH - Mammalian Gene Collection (MGC) project"/>
        </authorList>
    </citation>
    <scope>NUCLEOTIDE SEQUENCE [LARGE SCALE MRNA]</scope>
    <source>
        <strain>Hereford</strain>
        <tissue>Thymus</tissue>
    </source>
</reference>
<sequence>MQNYKYDKAIVAESKNGGSPALNNNPRKGGSKRVLLICLDLFCLFMAGLPFIIIETSTIKPYHRGFYCNDESIKYPQKTGETINDAVLTAVGIVIAILAIITGEFYRIYYLKEKSRSTIQNPYVAALYKQVGCFLFGCAISQSFTDIAKVSIGRLRPHFLNVCNPDFSQINCSVGYIQNYRCRGEDSKVQEARKSFFSGHASFSMYTMLYLVLYLQARFTWRGARLLRPLLQFTLIMMAFYTGLSRVSDHKHHPSDVLAGFAQGALVACCIVFFVSDLFKTKTTLSLPPSAIRKDMLSPVDIDRSNHHNMV</sequence>
<keyword id="KW-1003">Cell membrane</keyword>
<keyword id="KW-0256">Endoplasmic reticulum</keyword>
<keyword id="KW-0325">Glycoprotein</keyword>
<keyword id="KW-0333">Golgi apparatus</keyword>
<keyword id="KW-0378">Hydrolase</keyword>
<keyword id="KW-0443">Lipid metabolism</keyword>
<keyword id="KW-0472">Membrane</keyword>
<keyword id="KW-0597">Phosphoprotein</keyword>
<keyword id="KW-1185">Reference proteome</keyword>
<keyword id="KW-0812">Transmembrane</keyword>
<keyword id="KW-1133">Transmembrane helix</keyword>
<dbReference type="EC" id="3.1.3.-" evidence="1"/>
<dbReference type="EC" id="3.1.3.4" evidence="1"/>
<dbReference type="EMBL" id="BC102920">
    <property type="protein sequence ID" value="AAI02921.1"/>
    <property type="molecule type" value="mRNA"/>
</dbReference>
<dbReference type="RefSeq" id="NP_001069941.1">
    <property type="nucleotide sequence ID" value="NM_001076473.2"/>
</dbReference>
<dbReference type="FunCoup" id="Q3SZE3">
    <property type="interactions" value="770"/>
</dbReference>
<dbReference type="STRING" id="9913.ENSBTAP00000015460"/>
<dbReference type="GlyCosmos" id="Q3SZE3">
    <property type="glycosylation" value="1 site, No reported glycans"/>
</dbReference>
<dbReference type="GlyGen" id="Q3SZE3">
    <property type="glycosylation" value="1 site"/>
</dbReference>
<dbReference type="PaxDb" id="9913-ENSBTAP00000015460"/>
<dbReference type="Ensembl" id="ENSBTAT00000015460.7">
    <property type="protein sequence ID" value="ENSBTAP00000015460.5"/>
    <property type="gene ID" value="ENSBTAG00000011640.7"/>
</dbReference>
<dbReference type="GeneID" id="617707"/>
<dbReference type="KEGG" id="bta:617707"/>
<dbReference type="CTD" id="8613"/>
<dbReference type="VEuPathDB" id="HostDB:ENSBTAG00000011640"/>
<dbReference type="VGNC" id="VGNC:33046">
    <property type="gene designation" value="PLPP3"/>
</dbReference>
<dbReference type="eggNOG" id="KOG3030">
    <property type="taxonomic scope" value="Eukaryota"/>
</dbReference>
<dbReference type="GeneTree" id="ENSGT00940000156450"/>
<dbReference type="HOGENOM" id="CLU_021458_3_0_1"/>
<dbReference type="InParanoid" id="Q3SZE3"/>
<dbReference type="OMA" id="YPYKRST"/>
<dbReference type="OrthoDB" id="8907274at2759"/>
<dbReference type="TreeFam" id="TF316040"/>
<dbReference type="Reactome" id="R-BTA-9845614">
    <property type="pathway name" value="Sphingolipid catabolism"/>
</dbReference>
<dbReference type="UniPathway" id="UPA00085"/>
<dbReference type="Proteomes" id="UP000009136">
    <property type="component" value="Chromosome 3"/>
</dbReference>
<dbReference type="Bgee" id="ENSBTAG00000011640">
    <property type="expression patterns" value="Expressed in fornix of vagina and 105 other cell types or tissues"/>
</dbReference>
<dbReference type="GO" id="GO:0005912">
    <property type="term" value="C:adherens junction"/>
    <property type="evidence" value="ECO:0007669"/>
    <property type="project" value="Ensembl"/>
</dbReference>
<dbReference type="GO" id="GO:0016323">
    <property type="term" value="C:basolateral plasma membrane"/>
    <property type="evidence" value="ECO:0007669"/>
    <property type="project" value="UniProtKB-SubCell"/>
</dbReference>
<dbReference type="GO" id="GO:0070971">
    <property type="term" value="C:endoplasmic reticulum exit site"/>
    <property type="evidence" value="ECO:0000250"/>
    <property type="project" value="UniProtKB"/>
</dbReference>
<dbReference type="GO" id="GO:0005789">
    <property type="term" value="C:endoplasmic reticulum membrane"/>
    <property type="evidence" value="ECO:0007669"/>
    <property type="project" value="UniProtKB-SubCell"/>
</dbReference>
<dbReference type="GO" id="GO:0033116">
    <property type="term" value="C:endoplasmic reticulum-Golgi intermediate compartment membrane"/>
    <property type="evidence" value="ECO:0000250"/>
    <property type="project" value="UniProtKB"/>
</dbReference>
<dbReference type="GO" id="GO:0005794">
    <property type="term" value="C:Golgi apparatus"/>
    <property type="evidence" value="ECO:0000250"/>
    <property type="project" value="UniProtKB"/>
</dbReference>
<dbReference type="GO" id="GO:0000139">
    <property type="term" value="C:Golgi membrane"/>
    <property type="evidence" value="ECO:0007669"/>
    <property type="project" value="UniProtKB-SubCell"/>
</dbReference>
<dbReference type="GO" id="GO:0016020">
    <property type="term" value="C:membrane"/>
    <property type="evidence" value="ECO:0000250"/>
    <property type="project" value="UniProtKB"/>
</dbReference>
<dbReference type="GO" id="GO:0045121">
    <property type="term" value="C:membrane raft"/>
    <property type="evidence" value="ECO:0000250"/>
    <property type="project" value="UniProtKB"/>
</dbReference>
<dbReference type="GO" id="GO:0005886">
    <property type="term" value="C:plasma membrane"/>
    <property type="evidence" value="ECO:0000318"/>
    <property type="project" value="GO_Central"/>
</dbReference>
<dbReference type="GO" id="GO:0005802">
    <property type="term" value="C:trans-Golgi network"/>
    <property type="evidence" value="ECO:0000250"/>
    <property type="project" value="UniProtKB"/>
</dbReference>
<dbReference type="GO" id="GO:0106235">
    <property type="term" value="F:ceramide-1-phosphate phosphatase activity"/>
    <property type="evidence" value="ECO:0000250"/>
    <property type="project" value="UniProtKB"/>
</dbReference>
<dbReference type="GO" id="GO:0070097">
    <property type="term" value="F:delta-catenin binding"/>
    <property type="evidence" value="ECO:0007669"/>
    <property type="project" value="Ensembl"/>
</dbReference>
<dbReference type="GO" id="GO:0005178">
    <property type="term" value="F:integrin binding"/>
    <property type="evidence" value="ECO:0000250"/>
    <property type="project" value="UniProtKB"/>
</dbReference>
<dbReference type="GO" id="GO:0008195">
    <property type="term" value="F:phosphatidate phosphatase activity"/>
    <property type="evidence" value="ECO:0000250"/>
    <property type="project" value="UniProtKB"/>
</dbReference>
<dbReference type="GO" id="GO:0042392">
    <property type="term" value="F:sphingosine-1-phosphate phosphatase activity"/>
    <property type="evidence" value="ECO:0000250"/>
    <property type="project" value="UniProtKB"/>
</dbReference>
<dbReference type="GO" id="GO:0060020">
    <property type="term" value="P:Bergmann glial cell differentiation"/>
    <property type="evidence" value="ECO:0007669"/>
    <property type="project" value="Ensembl"/>
</dbReference>
<dbReference type="GO" id="GO:0001568">
    <property type="term" value="P:blood vessel development"/>
    <property type="evidence" value="ECO:0007669"/>
    <property type="project" value="Ensembl"/>
</dbReference>
<dbReference type="GO" id="GO:0098609">
    <property type="term" value="P:cell-cell adhesion"/>
    <property type="evidence" value="ECO:0000318"/>
    <property type="project" value="GO_Central"/>
</dbReference>
<dbReference type="GO" id="GO:0033631">
    <property type="term" value="P:cell-cell adhesion mediated by integrin"/>
    <property type="evidence" value="ECO:0000250"/>
    <property type="project" value="UniProtKB"/>
</dbReference>
<dbReference type="GO" id="GO:0006672">
    <property type="term" value="P:ceramide metabolic process"/>
    <property type="evidence" value="ECO:0000250"/>
    <property type="project" value="UniProtKB"/>
</dbReference>
<dbReference type="GO" id="GO:0001702">
    <property type="term" value="P:gastrulation with mouth forming second"/>
    <property type="evidence" value="ECO:0007669"/>
    <property type="project" value="Ensembl"/>
</dbReference>
<dbReference type="GO" id="GO:0007229">
    <property type="term" value="P:integrin-mediated signaling pathway"/>
    <property type="evidence" value="ECO:0000250"/>
    <property type="project" value="UniProtKB"/>
</dbReference>
<dbReference type="GO" id="GO:0046839">
    <property type="term" value="P:phospholipid dephosphorylation"/>
    <property type="evidence" value="ECO:0000250"/>
    <property type="project" value="UniProtKB"/>
</dbReference>
<dbReference type="GO" id="GO:0006644">
    <property type="term" value="P:phospholipid metabolic process"/>
    <property type="evidence" value="ECO:0000250"/>
    <property type="project" value="UniProtKB"/>
</dbReference>
<dbReference type="GO" id="GO:0010595">
    <property type="term" value="P:positive regulation of endothelial cell migration"/>
    <property type="evidence" value="ECO:0007669"/>
    <property type="project" value="Ensembl"/>
</dbReference>
<dbReference type="GO" id="GO:1904906">
    <property type="term" value="P:positive regulation of endothelial cell-matrix adhesion via fibronectin"/>
    <property type="evidence" value="ECO:0007669"/>
    <property type="project" value="Ensembl"/>
</dbReference>
<dbReference type="GO" id="GO:0034112">
    <property type="term" value="P:positive regulation of homotypic cell-cell adhesion"/>
    <property type="evidence" value="ECO:0007669"/>
    <property type="project" value="Ensembl"/>
</dbReference>
<dbReference type="GO" id="GO:1902533">
    <property type="term" value="P:positive regulation of intracellular signal transduction"/>
    <property type="evidence" value="ECO:0007669"/>
    <property type="project" value="Ensembl"/>
</dbReference>
<dbReference type="GO" id="GO:0045944">
    <property type="term" value="P:positive regulation of transcription by RNA polymerase II"/>
    <property type="evidence" value="ECO:0007669"/>
    <property type="project" value="Ensembl"/>
</dbReference>
<dbReference type="GO" id="GO:0050821">
    <property type="term" value="P:protein stabilization"/>
    <property type="evidence" value="ECO:0007669"/>
    <property type="project" value="Ensembl"/>
</dbReference>
<dbReference type="GO" id="GO:1902068">
    <property type="term" value="P:regulation of sphingolipid mediated signaling pathway"/>
    <property type="evidence" value="ECO:0007669"/>
    <property type="project" value="Ensembl"/>
</dbReference>
<dbReference type="GO" id="GO:0030111">
    <property type="term" value="P:regulation of Wnt signaling pathway"/>
    <property type="evidence" value="ECO:0007669"/>
    <property type="project" value="Ensembl"/>
</dbReference>
<dbReference type="GO" id="GO:0006890">
    <property type="term" value="P:retrograde vesicle-mediated transport, Golgi to endoplasmic reticulum"/>
    <property type="evidence" value="ECO:0000250"/>
    <property type="project" value="UniProtKB"/>
</dbReference>
<dbReference type="GO" id="GO:0007165">
    <property type="term" value="P:signal transduction"/>
    <property type="evidence" value="ECO:0000318"/>
    <property type="project" value="GO_Central"/>
</dbReference>
<dbReference type="GO" id="GO:0006670">
    <property type="term" value="P:sphingosine metabolic process"/>
    <property type="evidence" value="ECO:0000250"/>
    <property type="project" value="UniProtKB"/>
</dbReference>
<dbReference type="CDD" id="cd03384">
    <property type="entry name" value="PAP2_wunen"/>
    <property type="match status" value="1"/>
</dbReference>
<dbReference type="FunFam" id="1.20.144.10:FF:000013">
    <property type="entry name" value="Phospholipid phosphatase 3"/>
    <property type="match status" value="1"/>
</dbReference>
<dbReference type="Gene3D" id="1.20.144.10">
    <property type="entry name" value="Phosphatidic acid phosphatase type 2/haloperoxidase"/>
    <property type="match status" value="1"/>
</dbReference>
<dbReference type="InterPro" id="IPR036938">
    <property type="entry name" value="P_Acid_Pase_2/haloperoxi_sf"/>
</dbReference>
<dbReference type="InterPro" id="IPR000326">
    <property type="entry name" value="P_Acid_Pase_2/haloperoxidase"/>
</dbReference>
<dbReference type="InterPro" id="IPR043216">
    <property type="entry name" value="PA_PP_rel"/>
</dbReference>
<dbReference type="PANTHER" id="PTHR10165">
    <property type="entry name" value="LIPID PHOSPHATE PHOSPHATASE"/>
    <property type="match status" value="1"/>
</dbReference>
<dbReference type="PANTHER" id="PTHR10165:SF79">
    <property type="entry name" value="PHOSPHOLIPID PHOSPHATASE 3"/>
    <property type="match status" value="1"/>
</dbReference>
<dbReference type="Pfam" id="PF01569">
    <property type="entry name" value="PAP2"/>
    <property type="match status" value="1"/>
</dbReference>
<dbReference type="SMART" id="SM00014">
    <property type="entry name" value="acidPPc"/>
    <property type="match status" value="1"/>
</dbReference>
<dbReference type="SUPFAM" id="SSF48317">
    <property type="entry name" value="Acid phosphatase/Vanadium-dependent haloperoxidase"/>
    <property type="match status" value="1"/>
</dbReference>
<accession>Q3SZE3</accession>
<organism>
    <name type="scientific">Bos taurus</name>
    <name type="common">Bovine</name>
    <dbReference type="NCBI Taxonomy" id="9913"/>
    <lineage>
        <taxon>Eukaryota</taxon>
        <taxon>Metazoa</taxon>
        <taxon>Chordata</taxon>
        <taxon>Craniata</taxon>
        <taxon>Vertebrata</taxon>
        <taxon>Euteleostomi</taxon>
        <taxon>Mammalia</taxon>
        <taxon>Eutheria</taxon>
        <taxon>Laurasiatheria</taxon>
        <taxon>Artiodactyla</taxon>
        <taxon>Ruminantia</taxon>
        <taxon>Pecora</taxon>
        <taxon>Bovidae</taxon>
        <taxon>Bovinae</taxon>
        <taxon>Bos</taxon>
    </lineage>
</organism>